<evidence type="ECO:0000255" key="1">
    <source>
        <dbReference type="HAMAP-Rule" id="MF_01368"/>
    </source>
</evidence>
<evidence type="ECO:0000305" key="2"/>
<reference key="1">
    <citation type="journal article" date="2005" name="J. Bacteriol.">
        <title>Genomic sequence of an otitis media isolate of nontypeable Haemophilus influenzae: comparative study with H. influenzae serotype d, strain KW20.</title>
        <authorList>
            <person name="Harrison A."/>
            <person name="Dyer D.W."/>
            <person name="Gillaspy A."/>
            <person name="Ray W.C."/>
            <person name="Mungur R."/>
            <person name="Carson M.B."/>
            <person name="Zhong H."/>
            <person name="Gipson J."/>
            <person name="Gipson M."/>
            <person name="Johnson L.S."/>
            <person name="Lewis L."/>
            <person name="Bakaletz L.O."/>
            <person name="Munson R.S. Jr."/>
        </authorList>
    </citation>
    <scope>NUCLEOTIDE SEQUENCE [LARGE SCALE GENOMIC DNA]</scope>
    <source>
        <strain>86-028NP</strain>
    </source>
</reference>
<protein>
    <recommendedName>
        <fullName evidence="1">Large ribosomal subunit protein bL17</fullName>
    </recommendedName>
    <alternativeName>
        <fullName evidence="2">50S ribosomal protein L17</fullName>
    </alternativeName>
</protein>
<proteinExistence type="inferred from homology"/>
<name>RL17_HAEI8</name>
<dbReference type="EMBL" id="CP000057">
    <property type="protein sequence ID" value="AAX87851.1"/>
    <property type="molecule type" value="Genomic_DNA"/>
</dbReference>
<dbReference type="RefSeq" id="WP_005648400.1">
    <property type="nucleotide sequence ID" value="NC_007146.2"/>
</dbReference>
<dbReference type="SMR" id="Q4QM96"/>
<dbReference type="GeneID" id="93219844"/>
<dbReference type="KEGG" id="hit:NTHI0966"/>
<dbReference type="HOGENOM" id="CLU_074407_2_0_6"/>
<dbReference type="Proteomes" id="UP000002525">
    <property type="component" value="Chromosome"/>
</dbReference>
<dbReference type="GO" id="GO:0022625">
    <property type="term" value="C:cytosolic large ribosomal subunit"/>
    <property type="evidence" value="ECO:0007669"/>
    <property type="project" value="TreeGrafter"/>
</dbReference>
<dbReference type="GO" id="GO:0003735">
    <property type="term" value="F:structural constituent of ribosome"/>
    <property type="evidence" value="ECO:0007669"/>
    <property type="project" value="InterPro"/>
</dbReference>
<dbReference type="GO" id="GO:0006412">
    <property type="term" value="P:translation"/>
    <property type="evidence" value="ECO:0007669"/>
    <property type="project" value="UniProtKB-UniRule"/>
</dbReference>
<dbReference type="FunFam" id="3.90.1030.10:FF:000001">
    <property type="entry name" value="50S ribosomal protein L17"/>
    <property type="match status" value="1"/>
</dbReference>
<dbReference type="Gene3D" id="3.90.1030.10">
    <property type="entry name" value="Ribosomal protein L17"/>
    <property type="match status" value="1"/>
</dbReference>
<dbReference type="HAMAP" id="MF_01368">
    <property type="entry name" value="Ribosomal_bL17"/>
    <property type="match status" value="1"/>
</dbReference>
<dbReference type="InterPro" id="IPR000456">
    <property type="entry name" value="Ribosomal_bL17"/>
</dbReference>
<dbReference type="InterPro" id="IPR047859">
    <property type="entry name" value="Ribosomal_bL17_CS"/>
</dbReference>
<dbReference type="InterPro" id="IPR036373">
    <property type="entry name" value="Ribosomal_bL17_sf"/>
</dbReference>
<dbReference type="NCBIfam" id="TIGR00059">
    <property type="entry name" value="L17"/>
    <property type="match status" value="1"/>
</dbReference>
<dbReference type="PANTHER" id="PTHR14413:SF16">
    <property type="entry name" value="LARGE RIBOSOMAL SUBUNIT PROTEIN BL17M"/>
    <property type="match status" value="1"/>
</dbReference>
<dbReference type="PANTHER" id="PTHR14413">
    <property type="entry name" value="RIBOSOMAL PROTEIN L17"/>
    <property type="match status" value="1"/>
</dbReference>
<dbReference type="Pfam" id="PF01196">
    <property type="entry name" value="Ribosomal_L17"/>
    <property type="match status" value="1"/>
</dbReference>
<dbReference type="SUPFAM" id="SSF64263">
    <property type="entry name" value="Prokaryotic ribosomal protein L17"/>
    <property type="match status" value="1"/>
</dbReference>
<dbReference type="PROSITE" id="PS01167">
    <property type="entry name" value="RIBOSOMAL_L17"/>
    <property type="match status" value="1"/>
</dbReference>
<comment type="subunit">
    <text evidence="1">Part of the 50S ribosomal subunit. Contacts protein L32.</text>
</comment>
<comment type="similarity">
    <text evidence="1">Belongs to the bacterial ribosomal protein bL17 family.</text>
</comment>
<organism>
    <name type="scientific">Haemophilus influenzae (strain 86-028NP)</name>
    <dbReference type="NCBI Taxonomy" id="281310"/>
    <lineage>
        <taxon>Bacteria</taxon>
        <taxon>Pseudomonadati</taxon>
        <taxon>Pseudomonadota</taxon>
        <taxon>Gammaproteobacteria</taxon>
        <taxon>Pasteurellales</taxon>
        <taxon>Pasteurellaceae</taxon>
        <taxon>Haemophilus</taxon>
    </lineage>
</organism>
<feature type="chain" id="PRO_0000267879" description="Large ribosomal subunit protein bL17">
    <location>
        <begin position="1"/>
        <end position="128"/>
    </location>
</feature>
<sequence length="128" mass="14473">MRHRKSGRQLNRNSSHRQAMFRNLASALVSHEIIKTTLPKAKELRRVVEPLITLAKVDSVANRRLAFARTRNVETVAKLFNELGPRFAQRAGGYTRILKCGFRAGDNAPMAYIELVDRPEVAEATTEE</sequence>
<keyword id="KW-0687">Ribonucleoprotein</keyword>
<keyword id="KW-0689">Ribosomal protein</keyword>
<gene>
    <name evidence="1" type="primary">rplQ</name>
    <name type="ordered locus">NTHI0966</name>
</gene>
<accession>Q4QM96</accession>